<sequence length="252" mass="27601">MNKVVVKNVTFGEGAPKICVPMVGKTVAALKEEAEMLQTIDLDVVEWRVDFFEDVKDLAKVEAALDEIRTILPETPILFTFRSAKEGGELAVSDEFYFELNETLARTGKVDLVDVELFNEEADVLRLIETAHKNNVKVVMSNHDFDKTPAKEEIVSRLIRMEALGADLPKIAVMPKSAGDVLTLLDATNTVSEKANQPIITMSMAGTGVISRLAGEVFGSAMTFGAAKKASAPGQIDVNELRHVLDLLHKQF</sequence>
<organism>
    <name type="scientific">Listeria monocytogenes serotype 4a (strain HCC23)</name>
    <dbReference type="NCBI Taxonomy" id="552536"/>
    <lineage>
        <taxon>Bacteria</taxon>
        <taxon>Bacillati</taxon>
        <taxon>Bacillota</taxon>
        <taxon>Bacilli</taxon>
        <taxon>Bacillales</taxon>
        <taxon>Listeriaceae</taxon>
        <taxon>Listeria</taxon>
    </lineage>
</organism>
<protein>
    <recommendedName>
        <fullName evidence="1">3-dehydroquinate dehydratase</fullName>
        <shortName evidence="1">3-dehydroquinase</shortName>
        <ecNumber evidence="1">4.2.1.10</ecNumber>
    </recommendedName>
    <alternativeName>
        <fullName evidence="1">Type I DHQase</fullName>
    </alternativeName>
    <alternativeName>
        <fullName evidence="1">Type I dehydroquinase</fullName>
        <shortName evidence="1">DHQ1</shortName>
    </alternativeName>
</protein>
<accession>B8DCI1</accession>
<reference key="1">
    <citation type="journal article" date="2011" name="J. Bacteriol.">
        <title>Genome sequence of lineage III Listeria monocytogenes strain HCC23.</title>
        <authorList>
            <person name="Steele C.L."/>
            <person name="Donaldson J.R."/>
            <person name="Paul D."/>
            <person name="Banes M.M."/>
            <person name="Arick T."/>
            <person name="Bridges S.M."/>
            <person name="Lawrence M.L."/>
        </authorList>
    </citation>
    <scope>NUCLEOTIDE SEQUENCE [LARGE SCALE GENOMIC DNA]</scope>
    <source>
        <strain>HCC23</strain>
    </source>
</reference>
<evidence type="ECO:0000255" key="1">
    <source>
        <dbReference type="HAMAP-Rule" id="MF_00214"/>
    </source>
</evidence>
<proteinExistence type="inferred from homology"/>
<feature type="chain" id="PRO_1000124784" description="3-dehydroquinate dehydratase">
    <location>
        <begin position="1"/>
        <end position="252"/>
    </location>
</feature>
<feature type="active site" description="Proton donor/acceptor" evidence="1">
    <location>
        <position position="143"/>
    </location>
</feature>
<feature type="active site" description="Schiff-base intermediate with substrate" evidence="1">
    <location>
        <position position="170"/>
    </location>
</feature>
<feature type="binding site" evidence="1">
    <location>
        <begin position="46"/>
        <end position="48"/>
    </location>
    <ligand>
        <name>3-dehydroquinate</name>
        <dbReference type="ChEBI" id="CHEBI:32364"/>
    </ligand>
</feature>
<feature type="binding site" evidence="1">
    <location>
        <position position="82"/>
    </location>
    <ligand>
        <name>3-dehydroquinate</name>
        <dbReference type="ChEBI" id="CHEBI:32364"/>
    </ligand>
</feature>
<feature type="binding site" evidence="1">
    <location>
        <position position="212"/>
    </location>
    <ligand>
        <name>3-dehydroquinate</name>
        <dbReference type="ChEBI" id="CHEBI:32364"/>
    </ligand>
</feature>
<feature type="binding site" evidence="1">
    <location>
        <position position="231"/>
    </location>
    <ligand>
        <name>3-dehydroquinate</name>
        <dbReference type="ChEBI" id="CHEBI:32364"/>
    </ligand>
</feature>
<feature type="binding site" evidence="1">
    <location>
        <position position="235"/>
    </location>
    <ligand>
        <name>3-dehydroquinate</name>
        <dbReference type="ChEBI" id="CHEBI:32364"/>
    </ligand>
</feature>
<comment type="function">
    <text evidence="1">Involved in the third step of the chorismate pathway, which leads to the biosynthesis of aromatic amino acids. Catalyzes the cis-dehydration of 3-dehydroquinate (DHQ) and introduces the first double bond of the aromatic ring to yield 3-dehydroshikimate.</text>
</comment>
<comment type="catalytic activity">
    <reaction evidence="1">
        <text>3-dehydroquinate = 3-dehydroshikimate + H2O</text>
        <dbReference type="Rhea" id="RHEA:21096"/>
        <dbReference type="ChEBI" id="CHEBI:15377"/>
        <dbReference type="ChEBI" id="CHEBI:16630"/>
        <dbReference type="ChEBI" id="CHEBI:32364"/>
        <dbReference type="EC" id="4.2.1.10"/>
    </reaction>
</comment>
<comment type="pathway">
    <text evidence="1">Metabolic intermediate biosynthesis; chorismate biosynthesis; chorismate from D-erythrose 4-phosphate and phosphoenolpyruvate: step 3/7.</text>
</comment>
<comment type="subunit">
    <text evidence="1">Homodimer.</text>
</comment>
<comment type="similarity">
    <text evidence="1">Belongs to the type-I 3-dehydroquinase family.</text>
</comment>
<gene>
    <name evidence="1" type="primary">aroD</name>
    <name type="ordered locus">LMHCC_2146</name>
</gene>
<name>AROD_LISMH</name>
<dbReference type="EC" id="4.2.1.10" evidence="1"/>
<dbReference type="EMBL" id="CP001175">
    <property type="protein sequence ID" value="ACK40484.1"/>
    <property type="molecule type" value="Genomic_DNA"/>
</dbReference>
<dbReference type="RefSeq" id="WP_012581900.1">
    <property type="nucleotide sequence ID" value="NC_011660.1"/>
</dbReference>
<dbReference type="SMR" id="B8DCI1"/>
<dbReference type="KEGG" id="lmh:LMHCC_2146"/>
<dbReference type="HOGENOM" id="CLU_064444_0_0_9"/>
<dbReference type="UniPathway" id="UPA00053">
    <property type="reaction ID" value="UER00086"/>
</dbReference>
<dbReference type="GO" id="GO:0003855">
    <property type="term" value="F:3-dehydroquinate dehydratase activity"/>
    <property type="evidence" value="ECO:0007669"/>
    <property type="project" value="UniProtKB-UniRule"/>
</dbReference>
<dbReference type="GO" id="GO:0046279">
    <property type="term" value="P:3,4-dihydroxybenzoate biosynthetic process"/>
    <property type="evidence" value="ECO:0007669"/>
    <property type="project" value="TreeGrafter"/>
</dbReference>
<dbReference type="GO" id="GO:0008652">
    <property type="term" value="P:amino acid biosynthetic process"/>
    <property type="evidence" value="ECO:0007669"/>
    <property type="project" value="UniProtKB-KW"/>
</dbReference>
<dbReference type="GO" id="GO:0009073">
    <property type="term" value="P:aromatic amino acid family biosynthetic process"/>
    <property type="evidence" value="ECO:0007669"/>
    <property type="project" value="UniProtKB-KW"/>
</dbReference>
<dbReference type="GO" id="GO:0009423">
    <property type="term" value="P:chorismate biosynthetic process"/>
    <property type="evidence" value="ECO:0007669"/>
    <property type="project" value="UniProtKB-UniRule"/>
</dbReference>
<dbReference type="CDD" id="cd00502">
    <property type="entry name" value="DHQase_I"/>
    <property type="match status" value="1"/>
</dbReference>
<dbReference type="FunFam" id="3.20.20.70:FF:000047">
    <property type="entry name" value="3-dehydroquinate dehydratase"/>
    <property type="match status" value="1"/>
</dbReference>
<dbReference type="Gene3D" id="3.20.20.70">
    <property type="entry name" value="Aldolase class I"/>
    <property type="match status" value="1"/>
</dbReference>
<dbReference type="HAMAP" id="MF_00214">
    <property type="entry name" value="AroD"/>
    <property type="match status" value="1"/>
</dbReference>
<dbReference type="InterPro" id="IPR018508">
    <property type="entry name" value="3-dehydroquinate_DH_AS"/>
</dbReference>
<dbReference type="InterPro" id="IPR013785">
    <property type="entry name" value="Aldolase_TIM"/>
</dbReference>
<dbReference type="InterPro" id="IPR001381">
    <property type="entry name" value="DHquinase_I"/>
</dbReference>
<dbReference type="InterPro" id="IPR050146">
    <property type="entry name" value="Type-I_3-dehydroquinase"/>
</dbReference>
<dbReference type="NCBIfam" id="TIGR01093">
    <property type="entry name" value="aroD"/>
    <property type="match status" value="1"/>
</dbReference>
<dbReference type="PANTHER" id="PTHR43699">
    <property type="entry name" value="3-DEHYDROQUINATE DEHYDRATASE"/>
    <property type="match status" value="1"/>
</dbReference>
<dbReference type="PANTHER" id="PTHR43699:SF1">
    <property type="entry name" value="3-DEHYDROQUINATE DEHYDRATASE"/>
    <property type="match status" value="1"/>
</dbReference>
<dbReference type="Pfam" id="PF01487">
    <property type="entry name" value="DHquinase_I"/>
    <property type="match status" value="1"/>
</dbReference>
<dbReference type="SUPFAM" id="SSF51569">
    <property type="entry name" value="Aldolase"/>
    <property type="match status" value="1"/>
</dbReference>
<dbReference type="PROSITE" id="PS01028">
    <property type="entry name" value="DEHYDROQUINASE_I"/>
    <property type="match status" value="1"/>
</dbReference>
<keyword id="KW-0028">Amino-acid biosynthesis</keyword>
<keyword id="KW-0057">Aromatic amino acid biosynthesis</keyword>
<keyword id="KW-0456">Lyase</keyword>
<keyword id="KW-0704">Schiff base</keyword>